<reference key="1">
    <citation type="journal article" date="2008" name="J. Bacteriol.">
        <title>The complete genome sequence of Actinobacillus pleuropneumoniae L20 (serotype 5b).</title>
        <authorList>
            <person name="Foote S.J."/>
            <person name="Bosse J.T."/>
            <person name="Bouevitch A.B."/>
            <person name="Langford P.R."/>
            <person name="Young N.M."/>
            <person name="Nash J.H.E."/>
        </authorList>
    </citation>
    <scope>NUCLEOTIDE SEQUENCE [LARGE SCALE GENOMIC DNA]</scope>
    <source>
        <strain>L20</strain>
    </source>
</reference>
<keyword id="KW-0030">Aminoacyl-tRNA synthetase</keyword>
<keyword id="KW-0067">ATP-binding</keyword>
<keyword id="KW-0963">Cytoplasm</keyword>
<keyword id="KW-0436">Ligase</keyword>
<keyword id="KW-0479">Metal-binding</keyword>
<keyword id="KW-0547">Nucleotide-binding</keyword>
<keyword id="KW-0648">Protein biosynthesis</keyword>
<keyword id="KW-1185">Reference proteome</keyword>
<keyword id="KW-0862">Zinc</keyword>
<dbReference type="EC" id="6.1.1.5" evidence="1"/>
<dbReference type="EMBL" id="CP000569">
    <property type="protein sequence ID" value="ABN73152.1"/>
    <property type="molecule type" value="Genomic_DNA"/>
</dbReference>
<dbReference type="RefSeq" id="WP_005614268.1">
    <property type="nucleotide sequence ID" value="NC_009053.1"/>
</dbReference>
<dbReference type="SMR" id="A3MYB6"/>
<dbReference type="STRING" id="416269.APL_0044"/>
<dbReference type="EnsemblBacteria" id="ABN73152">
    <property type="protein sequence ID" value="ABN73152"/>
    <property type="gene ID" value="APL_0044"/>
</dbReference>
<dbReference type="KEGG" id="apl:APL_0044"/>
<dbReference type="eggNOG" id="COG0060">
    <property type="taxonomic scope" value="Bacteria"/>
</dbReference>
<dbReference type="HOGENOM" id="CLU_001493_7_1_6"/>
<dbReference type="Proteomes" id="UP000001432">
    <property type="component" value="Chromosome"/>
</dbReference>
<dbReference type="GO" id="GO:0005829">
    <property type="term" value="C:cytosol"/>
    <property type="evidence" value="ECO:0007669"/>
    <property type="project" value="TreeGrafter"/>
</dbReference>
<dbReference type="GO" id="GO:0002161">
    <property type="term" value="F:aminoacyl-tRNA deacylase activity"/>
    <property type="evidence" value="ECO:0007669"/>
    <property type="project" value="InterPro"/>
</dbReference>
<dbReference type="GO" id="GO:0005524">
    <property type="term" value="F:ATP binding"/>
    <property type="evidence" value="ECO:0007669"/>
    <property type="project" value="UniProtKB-UniRule"/>
</dbReference>
<dbReference type="GO" id="GO:0004822">
    <property type="term" value="F:isoleucine-tRNA ligase activity"/>
    <property type="evidence" value="ECO:0007669"/>
    <property type="project" value="UniProtKB-UniRule"/>
</dbReference>
<dbReference type="GO" id="GO:0000049">
    <property type="term" value="F:tRNA binding"/>
    <property type="evidence" value="ECO:0007669"/>
    <property type="project" value="InterPro"/>
</dbReference>
<dbReference type="GO" id="GO:0008270">
    <property type="term" value="F:zinc ion binding"/>
    <property type="evidence" value="ECO:0007669"/>
    <property type="project" value="UniProtKB-UniRule"/>
</dbReference>
<dbReference type="GO" id="GO:0006428">
    <property type="term" value="P:isoleucyl-tRNA aminoacylation"/>
    <property type="evidence" value="ECO:0007669"/>
    <property type="project" value="UniProtKB-UniRule"/>
</dbReference>
<dbReference type="CDD" id="cd07960">
    <property type="entry name" value="Anticodon_Ia_Ile_BEm"/>
    <property type="match status" value="1"/>
</dbReference>
<dbReference type="CDD" id="cd00818">
    <property type="entry name" value="IleRS_core"/>
    <property type="match status" value="1"/>
</dbReference>
<dbReference type="FunFam" id="1.10.730.20:FF:000001">
    <property type="entry name" value="Isoleucine--tRNA ligase"/>
    <property type="match status" value="1"/>
</dbReference>
<dbReference type="FunFam" id="3.40.50.620:FF:000042">
    <property type="entry name" value="Isoleucine--tRNA ligase"/>
    <property type="match status" value="1"/>
</dbReference>
<dbReference type="FunFam" id="3.40.50.620:FF:000048">
    <property type="entry name" value="Isoleucine--tRNA ligase"/>
    <property type="match status" value="1"/>
</dbReference>
<dbReference type="Gene3D" id="1.10.730.20">
    <property type="match status" value="1"/>
</dbReference>
<dbReference type="Gene3D" id="3.40.50.620">
    <property type="entry name" value="HUPs"/>
    <property type="match status" value="2"/>
</dbReference>
<dbReference type="Gene3D" id="3.90.740.10">
    <property type="entry name" value="Valyl/Leucyl/Isoleucyl-tRNA synthetase, editing domain"/>
    <property type="match status" value="1"/>
</dbReference>
<dbReference type="HAMAP" id="MF_02002">
    <property type="entry name" value="Ile_tRNA_synth_type1"/>
    <property type="match status" value="1"/>
</dbReference>
<dbReference type="InterPro" id="IPR001412">
    <property type="entry name" value="aa-tRNA-synth_I_CS"/>
</dbReference>
<dbReference type="InterPro" id="IPR002300">
    <property type="entry name" value="aa-tRNA-synth_Ia"/>
</dbReference>
<dbReference type="InterPro" id="IPR033708">
    <property type="entry name" value="Anticodon_Ile_BEm"/>
</dbReference>
<dbReference type="InterPro" id="IPR002301">
    <property type="entry name" value="Ile-tRNA-ligase"/>
</dbReference>
<dbReference type="InterPro" id="IPR023585">
    <property type="entry name" value="Ile-tRNA-ligase_type1"/>
</dbReference>
<dbReference type="InterPro" id="IPR050081">
    <property type="entry name" value="Ile-tRNA_ligase"/>
</dbReference>
<dbReference type="InterPro" id="IPR013155">
    <property type="entry name" value="M/V/L/I-tRNA-synth_anticd-bd"/>
</dbReference>
<dbReference type="InterPro" id="IPR014729">
    <property type="entry name" value="Rossmann-like_a/b/a_fold"/>
</dbReference>
<dbReference type="InterPro" id="IPR009080">
    <property type="entry name" value="tRNAsynth_Ia_anticodon-bd"/>
</dbReference>
<dbReference type="InterPro" id="IPR009008">
    <property type="entry name" value="Val/Leu/Ile-tRNA-synth_edit"/>
</dbReference>
<dbReference type="InterPro" id="IPR010663">
    <property type="entry name" value="Znf_FPG/IleRS"/>
</dbReference>
<dbReference type="NCBIfam" id="TIGR00392">
    <property type="entry name" value="ileS"/>
    <property type="match status" value="1"/>
</dbReference>
<dbReference type="PANTHER" id="PTHR42765:SF1">
    <property type="entry name" value="ISOLEUCINE--TRNA LIGASE, MITOCHONDRIAL"/>
    <property type="match status" value="1"/>
</dbReference>
<dbReference type="PANTHER" id="PTHR42765">
    <property type="entry name" value="SOLEUCYL-TRNA SYNTHETASE"/>
    <property type="match status" value="1"/>
</dbReference>
<dbReference type="Pfam" id="PF08264">
    <property type="entry name" value="Anticodon_1"/>
    <property type="match status" value="1"/>
</dbReference>
<dbReference type="Pfam" id="PF00133">
    <property type="entry name" value="tRNA-synt_1"/>
    <property type="match status" value="1"/>
</dbReference>
<dbReference type="Pfam" id="PF06827">
    <property type="entry name" value="zf-FPG_IleRS"/>
    <property type="match status" value="1"/>
</dbReference>
<dbReference type="PRINTS" id="PR00984">
    <property type="entry name" value="TRNASYNTHILE"/>
</dbReference>
<dbReference type="SUPFAM" id="SSF47323">
    <property type="entry name" value="Anticodon-binding domain of a subclass of class I aminoacyl-tRNA synthetases"/>
    <property type="match status" value="1"/>
</dbReference>
<dbReference type="SUPFAM" id="SSF52374">
    <property type="entry name" value="Nucleotidylyl transferase"/>
    <property type="match status" value="1"/>
</dbReference>
<dbReference type="SUPFAM" id="SSF50677">
    <property type="entry name" value="ValRS/IleRS/LeuRS editing domain"/>
    <property type="match status" value="1"/>
</dbReference>
<dbReference type="PROSITE" id="PS00178">
    <property type="entry name" value="AA_TRNA_LIGASE_I"/>
    <property type="match status" value="1"/>
</dbReference>
<comment type="function">
    <text evidence="1">Catalyzes the attachment of isoleucine to tRNA(Ile). As IleRS can inadvertently accommodate and process structurally similar amino acids such as valine, to avoid such errors it has two additional distinct tRNA(Ile)-dependent editing activities. One activity is designated as 'pretransfer' editing and involves the hydrolysis of activated Val-AMP. The other activity is designated 'posttransfer' editing and involves deacylation of mischarged Val-tRNA(Ile).</text>
</comment>
<comment type="catalytic activity">
    <reaction evidence="1">
        <text>tRNA(Ile) + L-isoleucine + ATP = L-isoleucyl-tRNA(Ile) + AMP + diphosphate</text>
        <dbReference type="Rhea" id="RHEA:11060"/>
        <dbReference type="Rhea" id="RHEA-COMP:9666"/>
        <dbReference type="Rhea" id="RHEA-COMP:9695"/>
        <dbReference type="ChEBI" id="CHEBI:30616"/>
        <dbReference type="ChEBI" id="CHEBI:33019"/>
        <dbReference type="ChEBI" id="CHEBI:58045"/>
        <dbReference type="ChEBI" id="CHEBI:78442"/>
        <dbReference type="ChEBI" id="CHEBI:78528"/>
        <dbReference type="ChEBI" id="CHEBI:456215"/>
        <dbReference type="EC" id="6.1.1.5"/>
    </reaction>
</comment>
<comment type="cofactor">
    <cofactor evidence="1">
        <name>Zn(2+)</name>
        <dbReference type="ChEBI" id="CHEBI:29105"/>
    </cofactor>
    <text evidence="1">Binds 1 zinc ion per subunit.</text>
</comment>
<comment type="subunit">
    <text evidence="1">Monomer.</text>
</comment>
<comment type="subcellular location">
    <subcellularLocation>
        <location evidence="1">Cytoplasm</location>
    </subcellularLocation>
</comment>
<comment type="domain">
    <text evidence="1">IleRS has two distinct active sites: one for aminoacylation and one for editing. The misactivated valine is translocated from the active site to the editing site, which sterically excludes the correctly activated isoleucine. The single editing site contains two valyl binding pockets, one specific for each substrate (Val-AMP or Val-tRNA(Ile)).</text>
</comment>
<comment type="similarity">
    <text evidence="1">Belongs to the class-I aminoacyl-tRNA synthetase family. IleS type 1 subfamily.</text>
</comment>
<gene>
    <name evidence="1" type="primary">ileS</name>
    <name type="ordered locus">APL_0044</name>
</gene>
<sequence>MIDYKNTLNLPETGFPMRGDLAKREPDMLKNWYDKNLYQKVRESSKGKKSFILHDGPPYANGNIHIGHAVNKILKDIIMKSKTALGFDTPYVPGWDCHGLPIELKVEGIVGKPNEKISAAEFRQACRDYAKEQVEGQKADFIRMGILGDWDNPYLTMNFDTEAHIIRTLGKVIANGHLYKGSKPVHWCLDCGSSLAEAEVEYEDKVSPSIYVRFKAIDSAAVEAKFNAVGKGSGQISAVIWTTTPWTLPSNKAISINPEFDYQLVQFGDERVVLVKDLVESVQKAVGVESVEVLGEVKGDALELMQFQHPFYDYSVPLILGDHVTTDGGTGLVHTAPDHGQDDFVVSKKYNIEMAGLVANDGKFISSTPFFAGLGVFESNEKVLEKLKEVGALLKLERIKHSYPHCWRHKTPIIFRATPQWFIGMETQGLREQALGEIKSVRWIPSWGEARIDTMVANRPDWCISRQRTWGVPMTMFVHNETEELHPRTLEILESVAKRVEEKGIQAWWDLDPVEVLGEEDAKNYRKVPDTLDVWFDSGSTYASVVEARPEFNGNSTDMYLEGSDQHRGWFMSSLMLSTATNGKAPYKQVLTHGFVVDEKGRKMSKSLGNVIVPSEVWNKNGADILRLWVASTDYTGEIAVSHNILNSAGESYRRIRNTARFLLANLNGFDPKRDLVKPEEMIALDRWAVSCALEAQNDIKEAYDNYQFHTVVQRLMRFCSIEMGSFYLDIIKDRQYTTKADSLARRSCQTALWHIAEALVRWMAPILSFTADEIWSYLPQVEGRSEFVFTEEFYEGLFGLTEADKLDDAYWQQILKVRAESNRVLEQARKDKVIGSGLEAKVTLYANNEIRAMLEQLGNELRFVLITSQAIIKPLSEADVAEGEMAGLAVKVERAEGEKCPRCWHFATDIGTHTEHSSVCGRCVENVAGEGEKRSFA</sequence>
<name>SYI_ACTP2</name>
<organism>
    <name type="scientific">Actinobacillus pleuropneumoniae serotype 5b (strain L20)</name>
    <dbReference type="NCBI Taxonomy" id="416269"/>
    <lineage>
        <taxon>Bacteria</taxon>
        <taxon>Pseudomonadati</taxon>
        <taxon>Pseudomonadota</taxon>
        <taxon>Gammaproteobacteria</taxon>
        <taxon>Pasteurellales</taxon>
        <taxon>Pasteurellaceae</taxon>
        <taxon>Actinobacillus</taxon>
    </lineage>
</organism>
<protein>
    <recommendedName>
        <fullName evidence="1">Isoleucine--tRNA ligase</fullName>
        <ecNumber evidence="1">6.1.1.5</ecNumber>
    </recommendedName>
    <alternativeName>
        <fullName evidence="1">Isoleucyl-tRNA synthetase</fullName>
        <shortName evidence="1">IleRS</shortName>
    </alternativeName>
</protein>
<feature type="chain" id="PRO_1000022036" description="Isoleucine--tRNA ligase">
    <location>
        <begin position="1"/>
        <end position="938"/>
    </location>
</feature>
<feature type="short sequence motif" description="'HIGH' region">
    <location>
        <begin position="58"/>
        <end position="68"/>
    </location>
</feature>
<feature type="short sequence motif" description="'KMSKS' region">
    <location>
        <begin position="603"/>
        <end position="607"/>
    </location>
</feature>
<feature type="binding site" evidence="1">
    <location>
        <position position="562"/>
    </location>
    <ligand>
        <name>L-isoleucyl-5'-AMP</name>
        <dbReference type="ChEBI" id="CHEBI:178002"/>
    </ligand>
</feature>
<feature type="binding site" evidence="1">
    <location>
        <position position="606"/>
    </location>
    <ligand>
        <name>ATP</name>
        <dbReference type="ChEBI" id="CHEBI:30616"/>
    </ligand>
</feature>
<feature type="binding site" evidence="1">
    <location>
        <position position="901"/>
    </location>
    <ligand>
        <name>Zn(2+)</name>
        <dbReference type="ChEBI" id="CHEBI:29105"/>
    </ligand>
</feature>
<feature type="binding site" evidence="1">
    <location>
        <position position="904"/>
    </location>
    <ligand>
        <name>Zn(2+)</name>
        <dbReference type="ChEBI" id="CHEBI:29105"/>
    </ligand>
</feature>
<feature type="binding site" evidence="1">
    <location>
        <position position="921"/>
    </location>
    <ligand>
        <name>Zn(2+)</name>
        <dbReference type="ChEBI" id="CHEBI:29105"/>
    </ligand>
</feature>
<feature type="binding site" evidence="1">
    <location>
        <position position="924"/>
    </location>
    <ligand>
        <name>Zn(2+)</name>
        <dbReference type="ChEBI" id="CHEBI:29105"/>
    </ligand>
</feature>
<proteinExistence type="inferred from homology"/>
<accession>A3MYB6</accession>
<evidence type="ECO:0000255" key="1">
    <source>
        <dbReference type="HAMAP-Rule" id="MF_02002"/>
    </source>
</evidence>